<sequence>MDDLTAQALKDFTARYCDAWHEEHKSWPLSEELYGVPSPCIISTTEDAVYWQPQPFTGEQNVNAVERAFDIVIQPTIHTFYTTQFAGDMHAQFGDIKLTLLQTWSEDDFRRVQENLIGHLVTQKRLKLPPTLFIATLEEELEVISVCNLSGEVCKETLGTRKRTHLASNLAEFLNQLKPLL</sequence>
<name>SYDP_SHISS</name>
<dbReference type="EMBL" id="CP000038">
    <property type="protein sequence ID" value="AAZ89549.1"/>
    <property type="molecule type" value="Genomic_DNA"/>
</dbReference>
<dbReference type="RefSeq" id="WP_000342431.1">
    <property type="nucleotide sequence ID" value="NC_007384.1"/>
</dbReference>
<dbReference type="SMR" id="Q3YY63"/>
<dbReference type="GeneID" id="93779205"/>
<dbReference type="KEGG" id="ssn:SSON_2950"/>
<dbReference type="HOGENOM" id="CLU_121866_0_0_6"/>
<dbReference type="Proteomes" id="UP000002529">
    <property type="component" value="Chromosome"/>
</dbReference>
<dbReference type="GO" id="GO:0009898">
    <property type="term" value="C:cytoplasmic side of plasma membrane"/>
    <property type="evidence" value="ECO:0007669"/>
    <property type="project" value="InterPro"/>
</dbReference>
<dbReference type="CDD" id="cd16323">
    <property type="entry name" value="Syd"/>
    <property type="match status" value="1"/>
</dbReference>
<dbReference type="FunFam" id="3.40.1580.20:FF:000001">
    <property type="entry name" value="Protein Syd"/>
    <property type="match status" value="1"/>
</dbReference>
<dbReference type="Gene3D" id="3.40.1580.20">
    <property type="entry name" value="Syd protein"/>
    <property type="match status" value="1"/>
</dbReference>
<dbReference type="HAMAP" id="MF_01104">
    <property type="entry name" value="Syd"/>
    <property type="match status" value="1"/>
</dbReference>
<dbReference type="InterPro" id="IPR009948">
    <property type="entry name" value="Syd"/>
</dbReference>
<dbReference type="InterPro" id="IPR038228">
    <property type="entry name" value="Syd_sf"/>
</dbReference>
<dbReference type="NCBIfam" id="NF003439">
    <property type="entry name" value="PRK04968.1"/>
    <property type="match status" value="1"/>
</dbReference>
<dbReference type="Pfam" id="PF07348">
    <property type="entry name" value="Syd"/>
    <property type="match status" value="1"/>
</dbReference>
<feature type="chain" id="PRO_0000298268" description="Protein Syd">
    <location>
        <begin position="1"/>
        <end position="181"/>
    </location>
</feature>
<proteinExistence type="inferred from homology"/>
<comment type="function">
    <text evidence="1">Interacts with the SecY protein in vivo. May bind preferentially to an uncomplexed state of SecY, thus functioning either as a chelating agent for excess SecY in the cell or as a regulatory factor that negatively controls the translocase function.</text>
</comment>
<comment type="subcellular location">
    <subcellularLocation>
        <location evidence="1">Cell inner membrane</location>
        <topology evidence="1">Peripheral membrane protein</topology>
        <orientation evidence="1">Cytoplasmic side</orientation>
    </subcellularLocation>
    <text evidence="1">Loosely associated with the cytoplasmic side of the inner membrane, probably via SecY.</text>
</comment>
<comment type="similarity">
    <text evidence="1">Belongs to the Syd family.</text>
</comment>
<reference key="1">
    <citation type="journal article" date="2005" name="Nucleic Acids Res.">
        <title>Genome dynamics and diversity of Shigella species, the etiologic agents of bacillary dysentery.</title>
        <authorList>
            <person name="Yang F."/>
            <person name="Yang J."/>
            <person name="Zhang X."/>
            <person name="Chen L."/>
            <person name="Jiang Y."/>
            <person name="Yan Y."/>
            <person name="Tang X."/>
            <person name="Wang J."/>
            <person name="Xiong Z."/>
            <person name="Dong J."/>
            <person name="Xue Y."/>
            <person name="Zhu Y."/>
            <person name="Xu X."/>
            <person name="Sun L."/>
            <person name="Chen S."/>
            <person name="Nie H."/>
            <person name="Peng J."/>
            <person name="Xu J."/>
            <person name="Wang Y."/>
            <person name="Yuan Z."/>
            <person name="Wen Y."/>
            <person name="Yao Z."/>
            <person name="Shen Y."/>
            <person name="Qiang B."/>
            <person name="Hou Y."/>
            <person name="Yu J."/>
            <person name="Jin Q."/>
        </authorList>
    </citation>
    <scope>NUCLEOTIDE SEQUENCE [LARGE SCALE GENOMIC DNA]</scope>
    <source>
        <strain>Ss046</strain>
    </source>
</reference>
<evidence type="ECO:0000255" key="1">
    <source>
        <dbReference type="HAMAP-Rule" id="MF_01104"/>
    </source>
</evidence>
<accession>Q3YY63</accession>
<organism>
    <name type="scientific">Shigella sonnei (strain Ss046)</name>
    <dbReference type="NCBI Taxonomy" id="300269"/>
    <lineage>
        <taxon>Bacteria</taxon>
        <taxon>Pseudomonadati</taxon>
        <taxon>Pseudomonadota</taxon>
        <taxon>Gammaproteobacteria</taxon>
        <taxon>Enterobacterales</taxon>
        <taxon>Enterobacteriaceae</taxon>
        <taxon>Shigella</taxon>
    </lineage>
</organism>
<keyword id="KW-0997">Cell inner membrane</keyword>
<keyword id="KW-1003">Cell membrane</keyword>
<keyword id="KW-0472">Membrane</keyword>
<keyword id="KW-1185">Reference proteome</keyword>
<protein>
    <recommendedName>
        <fullName evidence="1">Protein Syd</fullName>
    </recommendedName>
</protein>
<gene>
    <name evidence="1" type="primary">syd</name>
    <name type="ordered locus">SSON_2950</name>
</gene>